<keyword id="KW-0156">Chromatin regulator</keyword>
<keyword id="KW-0223">Dioxygenase</keyword>
<keyword id="KW-0408">Iron</keyword>
<keyword id="KW-0479">Metal-binding</keyword>
<keyword id="KW-0539">Nucleus</keyword>
<keyword id="KW-0560">Oxidoreductase</keyword>
<keyword id="KW-1185">Reference proteome</keyword>
<keyword id="KW-0678">Repressor</keyword>
<keyword id="KW-0804">Transcription</keyword>
<keyword id="KW-0805">Transcription regulation</keyword>
<evidence type="ECO:0000250" key="1">
    <source>
        <dbReference type="UniProtKB" id="Q9H6W3"/>
    </source>
</evidence>
<evidence type="ECO:0000250" key="2">
    <source>
        <dbReference type="UniProtKB" id="Q9JJF3"/>
    </source>
</evidence>
<evidence type="ECO:0000255" key="3">
    <source>
        <dbReference type="PROSITE-ProRule" id="PRU00538"/>
    </source>
</evidence>
<evidence type="ECO:0000256" key="4">
    <source>
        <dbReference type="SAM" id="MobiDB-lite"/>
    </source>
</evidence>
<evidence type="ECO:0000305" key="5"/>
<sequence length="544" mass="61517">MERKHMSALSIYQSLSGGKTPQAEDKAPPAKKVKRKENGVRPSKKATKKKGTKPLKSSVRSSSSEKEKHEGERDCREMNGKRFDNVALDILLTDLAKVNNSRDRANRLFQWLIHPVQDKSFFRDNWEKKPILIQRQNADYYKGLFSTAEFDRILRNDDVQYGVNLDVTSYTNGKRETHNPPGRALPYTVWDFYESGCSIRMLNPQAFSSTVWQVLSVLQEKFGSMAGANVYLTPPGTQGFAPHFDDIEAFVVQLEGRKHWRVYNPRCEDEVLSLVSSPNFSQDEIGEPVMDVVLEAGDLLYFPRGFVHQGDCLPDAHSLHITISSYQRNSWGDLMLKLMPAALEVAMEEDVEFRKGLPLDYLQYMGVQNSEKEDPRRDRFMAHIQGLMKKLVSFAPVDAAVDQKAKDFLHDCLPPLLTAEEKAGSVYGAPARWGDSEALDVAVELKSQTRIKLVRAGAARLCSDGDTVHLYYTTENSRVYHKEASKSFEMKTEHIDAMEFLIHSYPKFVSVASLPCETAEAKMSLAELLFEKGLIFTAEPLTAQ</sequence>
<organism>
    <name type="scientific">Danio rerio</name>
    <name type="common">Zebrafish</name>
    <name type="synonym">Brachydanio rerio</name>
    <dbReference type="NCBI Taxonomy" id="7955"/>
    <lineage>
        <taxon>Eukaryota</taxon>
        <taxon>Metazoa</taxon>
        <taxon>Chordata</taxon>
        <taxon>Craniata</taxon>
        <taxon>Vertebrata</taxon>
        <taxon>Euteleostomi</taxon>
        <taxon>Actinopterygii</taxon>
        <taxon>Neopterygii</taxon>
        <taxon>Teleostei</taxon>
        <taxon>Ostariophysi</taxon>
        <taxon>Cypriniformes</taxon>
        <taxon>Danionidae</taxon>
        <taxon>Danioninae</taxon>
        <taxon>Danio</taxon>
    </lineage>
</organism>
<reference key="1">
    <citation type="submission" date="2007-03" db="EMBL/GenBank/DDBJ databases">
        <authorList>
            <consortium name="NIH - Zebrafish Gene Collection (ZGC) project"/>
        </authorList>
    </citation>
    <scope>NUCLEOTIDE SEQUENCE [LARGE SCALE MRNA]</scope>
    <source>
        <tissue>Ovary</tissue>
    </source>
</reference>
<protein>
    <recommendedName>
        <fullName>Ribosomal oxygenase 1</fullName>
    </recommendedName>
    <alternativeName>
        <fullName>Bifunctional lysine-specific demethylase and histidyl-hydroxylase NO66</fullName>
        <ecNumber evidence="2">1.14.11.27</ecNumber>
        <ecNumber evidence="2">1.14.11.79</ecNumber>
    </alternativeName>
    <alternativeName>
        <fullName>Histone lysine demethylase NO66</fullName>
    </alternativeName>
</protein>
<feature type="chain" id="PRO_0000390977" description="Ribosomal oxygenase 1">
    <location>
        <begin position="1"/>
        <end position="544"/>
    </location>
</feature>
<feature type="domain" description="JmjC" evidence="3">
    <location>
        <begin position="197"/>
        <end position="342"/>
    </location>
</feature>
<feature type="region of interest" description="Disordered" evidence="4">
    <location>
        <begin position="1"/>
        <end position="78"/>
    </location>
</feature>
<feature type="compositionally biased region" description="Polar residues" evidence="4">
    <location>
        <begin position="10"/>
        <end position="19"/>
    </location>
</feature>
<feature type="compositionally biased region" description="Basic residues" evidence="4">
    <location>
        <begin position="42"/>
        <end position="53"/>
    </location>
</feature>
<feature type="compositionally biased region" description="Basic and acidic residues" evidence="4">
    <location>
        <begin position="63"/>
        <end position="78"/>
    </location>
</feature>
<feature type="binding site" evidence="3">
    <location>
        <position position="243"/>
    </location>
    <ligand>
        <name>Fe cation</name>
        <dbReference type="ChEBI" id="CHEBI:24875"/>
        <note>catalytic</note>
    </ligand>
</feature>
<feature type="binding site" evidence="3">
    <location>
        <position position="245"/>
    </location>
    <ligand>
        <name>Fe cation</name>
        <dbReference type="ChEBI" id="CHEBI:24875"/>
        <note>catalytic</note>
    </ligand>
</feature>
<feature type="binding site" evidence="3">
    <location>
        <position position="308"/>
    </location>
    <ligand>
        <name>Fe cation</name>
        <dbReference type="ChEBI" id="CHEBI:24875"/>
        <note>catalytic</note>
    </ligand>
</feature>
<proteinExistence type="evidence at transcript level"/>
<gene>
    <name type="primary">riox1</name>
    <name type="synonym">no66</name>
    <name type="ORF">zgc:162967</name>
</gene>
<accession>A3KP59</accession>
<name>RIOX1_DANRE</name>
<comment type="function">
    <text evidence="1 2">Oxygenase that can act as both a histone lysine demethylase and a ribosomal histidine hydroxylase (By similarity). Specifically demethylates 'Lys-4' (H3K4me) and 'Lys-36' (H3K36me) of histone H3, thereby playing a central role in histone code. Preferentially demethylates trimethylated H3 'Lys-4' (H3K4me3) and monomethylated H3 'Lys-4' (H3K4me1) residues, while it has weaker activity for dimethylated H3 'Lys-36' (H3K36me2). Also catalyzes demethylation of non-histone proteins (By similarity). Also catalyzes the hydroxylation of 60S ribosomal protein L8 on 'His-216', thereby playing a role in ribosome biogenesis (By similarity).</text>
</comment>
<comment type="catalytic activity">
    <reaction evidence="2">
        <text>N(6),N(6)-dimethyl-L-lysyl(36)-[histone H3] + 2 2-oxoglutarate + 2 O2 = L-lysyl(36)-[histone H3] + 2 formaldehyde + 2 succinate + 2 CO2</text>
        <dbReference type="Rhea" id="RHEA:42032"/>
        <dbReference type="Rhea" id="RHEA-COMP:9785"/>
        <dbReference type="Rhea" id="RHEA-COMP:9787"/>
        <dbReference type="ChEBI" id="CHEBI:15379"/>
        <dbReference type="ChEBI" id="CHEBI:16526"/>
        <dbReference type="ChEBI" id="CHEBI:16810"/>
        <dbReference type="ChEBI" id="CHEBI:16842"/>
        <dbReference type="ChEBI" id="CHEBI:29969"/>
        <dbReference type="ChEBI" id="CHEBI:30031"/>
        <dbReference type="ChEBI" id="CHEBI:61976"/>
        <dbReference type="EC" id="1.14.11.27"/>
    </reaction>
    <physiologicalReaction direction="left-to-right" evidence="2">
        <dbReference type="Rhea" id="RHEA:42033"/>
    </physiologicalReaction>
</comment>
<comment type="catalytic activity">
    <reaction evidence="1">
        <text>N(6)-methyl-L-lysyl-[protein] + 2-oxoglutarate + O2 = L-lysyl-[protein] + formaldehyde + succinate + CO2</text>
        <dbReference type="Rhea" id="RHEA:60924"/>
        <dbReference type="Rhea" id="RHEA-COMP:9752"/>
        <dbReference type="Rhea" id="RHEA-COMP:13053"/>
        <dbReference type="ChEBI" id="CHEBI:15379"/>
        <dbReference type="ChEBI" id="CHEBI:16526"/>
        <dbReference type="ChEBI" id="CHEBI:16810"/>
        <dbReference type="ChEBI" id="CHEBI:16842"/>
        <dbReference type="ChEBI" id="CHEBI:29969"/>
        <dbReference type="ChEBI" id="CHEBI:30031"/>
        <dbReference type="ChEBI" id="CHEBI:61929"/>
    </reaction>
    <physiologicalReaction direction="left-to-right" evidence="1">
        <dbReference type="Rhea" id="RHEA:60925"/>
    </physiologicalReaction>
</comment>
<comment type="catalytic activity">
    <reaction evidence="1">
        <text>L-histidyl-[protein] + 2-oxoglutarate + O2 = (3S)-3-hydroxy-L-histidyl-[protein] + succinate + CO2</text>
        <dbReference type="Rhea" id="RHEA:54256"/>
        <dbReference type="Rhea" id="RHEA-COMP:9745"/>
        <dbReference type="Rhea" id="RHEA-COMP:13840"/>
        <dbReference type="ChEBI" id="CHEBI:15379"/>
        <dbReference type="ChEBI" id="CHEBI:16526"/>
        <dbReference type="ChEBI" id="CHEBI:16810"/>
        <dbReference type="ChEBI" id="CHEBI:29979"/>
        <dbReference type="ChEBI" id="CHEBI:30031"/>
        <dbReference type="ChEBI" id="CHEBI:138021"/>
        <dbReference type="EC" id="1.14.11.79"/>
    </reaction>
    <physiologicalReaction direction="left-to-right" evidence="1">
        <dbReference type="Rhea" id="RHEA:54257"/>
    </physiologicalReaction>
</comment>
<comment type="cofactor">
    <cofactor evidence="2">
        <name>Fe(2+)</name>
        <dbReference type="ChEBI" id="CHEBI:29033"/>
    </cofactor>
    <text evidence="2">Binds 1 Fe(2+) ion per subunit.</text>
</comment>
<comment type="subcellular location">
    <subcellularLocation>
        <location evidence="1">Nucleus</location>
        <location evidence="1">Nucleolus</location>
    </subcellularLocation>
    <subcellularLocation>
        <location evidence="1">Nucleus</location>
        <location evidence="1">Nucleoplasm</location>
    </subcellularLocation>
    <text evidence="1">Granular part of nucleoli. Nucleoplasm, nucleoplasmic foci, some of them associated with nucleoli.</text>
</comment>
<comment type="similarity">
    <text evidence="5">Belongs to the ROX family. NO66 subfamily.</text>
</comment>
<dbReference type="EC" id="1.14.11.27" evidence="2"/>
<dbReference type="EC" id="1.14.11.79" evidence="2"/>
<dbReference type="EMBL" id="BC134172">
    <property type="protein sequence ID" value="AAI34173.1"/>
    <property type="molecule type" value="mRNA"/>
</dbReference>
<dbReference type="RefSeq" id="NP_001082857.1">
    <property type="nucleotide sequence ID" value="NM_001089388.1"/>
</dbReference>
<dbReference type="SMR" id="A3KP59"/>
<dbReference type="FunCoup" id="A3KP59">
    <property type="interactions" value="954"/>
</dbReference>
<dbReference type="STRING" id="7955.ENSDARP00000088500"/>
<dbReference type="PaxDb" id="7955-ENSDARP00000088500"/>
<dbReference type="PeptideAtlas" id="A3KP59"/>
<dbReference type="GeneID" id="560815"/>
<dbReference type="KEGG" id="dre:560815"/>
<dbReference type="AGR" id="ZFIN:ZDB-GENE-041008-221"/>
<dbReference type="CTD" id="79697"/>
<dbReference type="ZFIN" id="ZDB-GENE-041008-221">
    <property type="gene designation" value="riox1"/>
</dbReference>
<dbReference type="eggNOG" id="KOG3706">
    <property type="taxonomic scope" value="Eukaryota"/>
</dbReference>
<dbReference type="InParanoid" id="A3KP59"/>
<dbReference type="OrthoDB" id="425950at2759"/>
<dbReference type="PhylomeDB" id="A3KP59"/>
<dbReference type="Reactome" id="R-DRE-9629569">
    <property type="pathway name" value="Protein hydroxylation"/>
</dbReference>
<dbReference type="PRO" id="PR:A3KP59"/>
<dbReference type="Proteomes" id="UP000000437">
    <property type="component" value="Chromosome 20"/>
</dbReference>
<dbReference type="GO" id="GO:0005730">
    <property type="term" value="C:nucleolus"/>
    <property type="evidence" value="ECO:0000318"/>
    <property type="project" value="GO_Central"/>
</dbReference>
<dbReference type="GO" id="GO:0005654">
    <property type="term" value="C:nucleoplasm"/>
    <property type="evidence" value="ECO:0007669"/>
    <property type="project" value="UniProtKB-SubCell"/>
</dbReference>
<dbReference type="GO" id="GO:0005634">
    <property type="term" value="C:nucleus"/>
    <property type="evidence" value="ECO:0000250"/>
    <property type="project" value="UniProtKB"/>
</dbReference>
<dbReference type="GO" id="GO:0016706">
    <property type="term" value="F:2-oxoglutarate-dependent dioxygenase activity"/>
    <property type="evidence" value="ECO:0000250"/>
    <property type="project" value="UniProtKB"/>
</dbReference>
<dbReference type="GO" id="GO:0051864">
    <property type="term" value="F:histone H3K36 demethylase activity"/>
    <property type="evidence" value="ECO:0000250"/>
    <property type="project" value="UniProtKB"/>
</dbReference>
<dbReference type="GO" id="GO:0140680">
    <property type="term" value="F:histone H3K36me/H3K36me2 demethylase activity"/>
    <property type="evidence" value="ECO:0007669"/>
    <property type="project" value="UniProtKB-EC"/>
</dbReference>
<dbReference type="GO" id="GO:0032453">
    <property type="term" value="F:histone H3K4 demethylase activity"/>
    <property type="evidence" value="ECO:0000318"/>
    <property type="project" value="GO_Central"/>
</dbReference>
<dbReference type="GO" id="GO:0034647">
    <property type="term" value="F:histone H3K4me/H3K4me2/H3K4me3 demethylase activity"/>
    <property type="evidence" value="ECO:0000250"/>
    <property type="project" value="UniProtKB"/>
</dbReference>
<dbReference type="GO" id="GO:0005506">
    <property type="term" value="F:iron ion binding"/>
    <property type="evidence" value="ECO:0000250"/>
    <property type="project" value="UniProtKB"/>
</dbReference>
<dbReference type="GO" id="GO:0036139">
    <property type="term" value="F:peptidyl-histidine dioxygenase activity"/>
    <property type="evidence" value="ECO:0000250"/>
    <property type="project" value="UniProtKB"/>
</dbReference>
<dbReference type="GO" id="GO:0140457">
    <property type="term" value="F:protein demethylase activity"/>
    <property type="evidence" value="ECO:0000250"/>
    <property type="project" value="UniProtKB"/>
</dbReference>
<dbReference type="GO" id="GO:0045892">
    <property type="term" value="P:negative regulation of DNA-templated transcription"/>
    <property type="evidence" value="ECO:0000250"/>
    <property type="project" value="UniProtKB"/>
</dbReference>
<dbReference type="GO" id="GO:0045668">
    <property type="term" value="P:negative regulation of osteoblast differentiation"/>
    <property type="evidence" value="ECO:0000250"/>
    <property type="project" value="UniProtKB"/>
</dbReference>
<dbReference type="FunFam" id="2.60.120.650:FF:000013">
    <property type="entry name" value="Ribosomal oxygenase 1"/>
    <property type="match status" value="1"/>
</dbReference>
<dbReference type="FunFam" id="1.10.10.1500:FF:000001">
    <property type="entry name" value="ribosomal oxygenase 1 isoform X1"/>
    <property type="match status" value="1"/>
</dbReference>
<dbReference type="FunFam" id="3.90.930.40:FF:000001">
    <property type="entry name" value="ribosomal oxygenase 1 isoform X1"/>
    <property type="match status" value="1"/>
</dbReference>
<dbReference type="Gene3D" id="3.90.930.40">
    <property type="match status" value="1"/>
</dbReference>
<dbReference type="Gene3D" id="2.60.120.650">
    <property type="entry name" value="Cupin"/>
    <property type="match status" value="1"/>
</dbReference>
<dbReference type="Gene3D" id="1.10.10.1500">
    <property type="entry name" value="JmjC domain-containing ribosomal oxygenase (ROX), dimer domain"/>
    <property type="match status" value="1"/>
</dbReference>
<dbReference type="InterPro" id="IPR003347">
    <property type="entry name" value="JmjC_dom"/>
</dbReference>
<dbReference type="InterPro" id="IPR039994">
    <property type="entry name" value="NO66-like"/>
</dbReference>
<dbReference type="InterPro" id="IPR049043">
    <property type="entry name" value="RIOX1/NO66-like_C_WH"/>
</dbReference>
<dbReference type="PANTHER" id="PTHR13096">
    <property type="entry name" value="MINA53 MYC INDUCED NUCLEAR ANTIGEN"/>
    <property type="match status" value="1"/>
</dbReference>
<dbReference type="PANTHER" id="PTHR13096:SF8">
    <property type="entry name" value="RIBOSOMAL OXYGENASE 1"/>
    <property type="match status" value="1"/>
</dbReference>
<dbReference type="Pfam" id="PF08007">
    <property type="entry name" value="JmjC_2"/>
    <property type="match status" value="1"/>
</dbReference>
<dbReference type="Pfam" id="PF21233">
    <property type="entry name" value="RIOX1_C_WH"/>
    <property type="match status" value="1"/>
</dbReference>
<dbReference type="SUPFAM" id="SSF51197">
    <property type="entry name" value="Clavaminate synthase-like"/>
    <property type="match status" value="1"/>
</dbReference>
<dbReference type="PROSITE" id="PS51184">
    <property type="entry name" value="JMJC"/>
    <property type="match status" value="1"/>
</dbReference>